<protein>
    <recommendedName>
        <fullName evidence="1">NAD(P)H-quinone oxidoreductase subunit I, chloroplastic</fullName>
        <ecNumber evidence="1">7.1.1.-</ecNumber>
    </recommendedName>
    <alternativeName>
        <fullName evidence="1">NAD(P)H dehydrogenase subunit I</fullName>
        <shortName evidence="1">NDH subunit I</shortName>
    </alternativeName>
    <alternativeName>
        <fullName evidence="1">NADH-plastoquinone oxidoreductase subunit I</fullName>
    </alternativeName>
</protein>
<feature type="chain" id="PRO_0000245657" description="NAD(P)H-quinone oxidoreductase subunit I, chloroplastic">
    <location>
        <begin position="1"/>
        <end position="160"/>
    </location>
</feature>
<feature type="domain" description="4Fe-4S ferredoxin-type 1" evidence="1">
    <location>
        <begin position="55"/>
        <end position="84"/>
    </location>
</feature>
<feature type="domain" description="4Fe-4S ferredoxin-type 2" evidence="1">
    <location>
        <begin position="95"/>
        <end position="124"/>
    </location>
</feature>
<feature type="binding site" evidence="1">
    <location>
        <position position="64"/>
    </location>
    <ligand>
        <name>[4Fe-4S] cluster</name>
        <dbReference type="ChEBI" id="CHEBI:49883"/>
        <label>1</label>
    </ligand>
</feature>
<feature type="binding site" evidence="1">
    <location>
        <position position="67"/>
    </location>
    <ligand>
        <name>[4Fe-4S] cluster</name>
        <dbReference type="ChEBI" id="CHEBI:49883"/>
        <label>1</label>
    </ligand>
</feature>
<feature type="binding site" evidence="1">
    <location>
        <position position="70"/>
    </location>
    <ligand>
        <name>[4Fe-4S] cluster</name>
        <dbReference type="ChEBI" id="CHEBI:49883"/>
        <label>1</label>
    </ligand>
</feature>
<feature type="binding site" evidence="1">
    <location>
        <position position="74"/>
    </location>
    <ligand>
        <name>[4Fe-4S] cluster</name>
        <dbReference type="ChEBI" id="CHEBI:49883"/>
        <label>2</label>
    </ligand>
</feature>
<feature type="binding site" evidence="1">
    <location>
        <position position="104"/>
    </location>
    <ligand>
        <name>[4Fe-4S] cluster</name>
        <dbReference type="ChEBI" id="CHEBI:49883"/>
        <label>2</label>
    </ligand>
</feature>
<feature type="binding site" evidence="1">
    <location>
        <position position="107"/>
    </location>
    <ligand>
        <name>[4Fe-4S] cluster</name>
        <dbReference type="ChEBI" id="CHEBI:49883"/>
        <label>2</label>
    </ligand>
</feature>
<feature type="binding site" evidence="1">
    <location>
        <position position="110"/>
    </location>
    <ligand>
        <name>[4Fe-4S] cluster</name>
        <dbReference type="ChEBI" id="CHEBI:49883"/>
        <label>2</label>
    </ligand>
</feature>
<feature type="binding site" evidence="1">
    <location>
        <position position="114"/>
    </location>
    <ligand>
        <name>[4Fe-4S] cluster</name>
        <dbReference type="ChEBI" id="CHEBI:49883"/>
        <label>1</label>
    </ligand>
</feature>
<feature type="sequence conflict" description="In Ref. 2; CAJ00813." evidence="2" ref="2">
    <original>V</original>
    <variation>A</variation>
    <location>
        <position position="69"/>
    </location>
</feature>
<organism>
    <name type="scientific">Cucumis sativus</name>
    <name type="common">Cucumber</name>
    <dbReference type="NCBI Taxonomy" id="3659"/>
    <lineage>
        <taxon>Eukaryota</taxon>
        <taxon>Viridiplantae</taxon>
        <taxon>Streptophyta</taxon>
        <taxon>Embryophyta</taxon>
        <taxon>Tracheophyta</taxon>
        <taxon>Spermatophyta</taxon>
        <taxon>Magnoliopsida</taxon>
        <taxon>eudicotyledons</taxon>
        <taxon>Gunneridae</taxon>
        <taxon>Pentapetalae</taxon>
        <taxon>rosids</taxon>
        <taxon>fabids</taxon>
        <taxon>Cucurbitales</taxon>
        <taxon>Cucurbitaceae</taxon>
        <taxon>Benincaseae</taxon>
        <taxon>Cucumis</taxon>
    </lineage>
</organism>
<keyword id="KW-0004">4Fe-4S</keyword>
<keyword id="KW-0150">Chloroplast</keyword>
<keyword id="KW-0408">Iron</keyword>
<keyword id="KW-0411">Iron-sulfur</keyword>
<keyword id="KW-0472">Membrane</keyword>
<keyword id="KW-0479">Metal-binding</keyword>
<keyword id="KW-0520">NAD</keyword>
<keyword id="KW-0521">NADP</keyword>
<keyword id="KW-0934">Plastid</keyword>
<keyword id="KW-0618">Plastoquinone</keyword>
<keyword id="KW-0874">Quinone</keyword>
<keyword id="KW-0677">Repeat</keyword>
<keyword id="KW-0793">Thylakoid</keyword>
<keyword id="KW-1278">Translocase</keyword>
<name>NDHI_CUCSA</name>
<evidence type="ECO:0000255" key="1">
    <source>
        <dbReference type="HAMAP-Rule" id="MF_01351"/>
    </source>
</evidence>
<evidence type="ECO:0000305" key="2"/>
<reference key="1">
    <citation type="journal article" date="2006" name="Plant Cell Rep.">
        <title>Complete sequence and organization of the cucumber (Cucumis sativus L. cv. Baekmibaekdadagi) chloroplast genome.</title>
        <authorList>
            <person name="Kim J.-S."/>
            <person name="Jung J.D."/>
            <person name="Lee J.-A."/>
            <person name="Park H.-W."/>
            <person name="Oh K.-H."/>
            <person name="Jeong W.J."/>
            <person name="Choi D.-W."/>
            <person name="Liu J.R."/>
            <person name="Cho K.Y."/>
        </authorList>
    </citation>
    <scope>NUCLEOTIDE SEQUENCE [LARGE SCALE GENOMIC DNA]</scope>
    <source>
        <strain>cv. Baekmibaekdadagi</strain>
    </source>
</reference>
<reference key="2">
    <citation type="journal article" date="2007" name="Cell. Mol. Biol. Lett.">
        <title>The complete structure of the cucumber (Cucumis sativus L.) chloroplast genome: its composition and comparative analysis.</title>
        <authorList>
            <person name="Plader W.W."/>
            <person name="Yukawa Y."/>
            <person name="Sugiura M."/>
            <person name="Malepszy S."/>
        </authorList>
    </citation>
    <scope>NUCLEOTIDE SEQUENCE [LARGE SCALE GENOMIC DNA]</scope>
    <source>
        <strain>cv. Borszczagowski</strain>
    </source>
</reference>
<reference key="3">
    <citation type="journal article" date="2007" name="Genome">
        <title>Sequencing cucumber (Cucumis sativus L.) chloroplast genomes identifies differences between chilling-tolerant and -susceptible cucumber lines.</title>
        <authorList>
            <person name="Chung S.-M."/>
            <person name="Gordon V.S."/>
            <person name="Staub J.E."/>
        </authorList>
    </citation>
    <scope>NUCLEOTIDE SEQUENCE [LARGE SCALE GENOMIC DNA]</scope>
    <source>
        <strain>cv. Chipper</strain>
        <strain>cv. Gy14</strain>
    </source>
</reference>
<geneLocation type="chloroplast"/>
<gene>
    <name evidence="1" type="primary">ndhI</name>
    <name type="ordered locus">CsCp109</name>
</gene>
<sequence>MFPMVTGFMNYGQQTVRAARYIGQGFVITLSHANRLPVTIQYPYEKLIASERFRGRIHFEFDKCIACEVCVRVCPIDLPVVDWKLETDIRKKRLLNYSIDFGICIFCGNCVEYCPTNCLSMTEEYELSTYDRHELNYNQISLGRLPMSVVDDYTIRTILN</sequence>
<dbReference type="EC" id="7.1.1.-" evidence="1"/>
<dbReference type="EMBL" id="DQ119058">
    <property type="protein sequence ID" value="AAZ94702.1"/>
    <property type="molecule type" value="Genomic_DNA"/>
</dbReference>
<dbReference type="EMBL" id="AJ970307">
    <property type="protein sequence ID" value="CAJ00813.1"/>
    <property type="molecule type" value="Genomic_DNA"/>
</dbReference>
<dbReference type="EMBL" id="DQ865975">
    <property type="protein sequence ID" value="ABI97467.1"/>
    <property type="molecule type" value="Genomic_DNA"/>
</dbReference>
<dbReference type="EMBL" id="DQ865976">
    <property type="protein sequence ID" value="ABI98798.1"/>
    <property type="molecule type" value="Genomic_DNA"/>
</dbReference>
<dbReference type="RefSeq" id="YP_247654.1">
    <property type="nucleotide sequence ID" value="NC_007144.1"/>
</dbReference>
<dbReference type="SMR" id="Q2QD37"/>
<dbReference type="GeneID" id="3429261"/>
<dbReference type="KEGG" id="csv:3429261"/>
<dbReference type="eggNOG" id="KOG3256">
    <property type="taxonomic scope" value="Eukaryota"/>
</dbReference>
<dbReference type="OrthoDB" id="24758at2759"/>
<dbReference type="GO" id="GO:0009535">
    <property type="term" value="C:chloroplast thylakoid membrane"/>
    <property type="evidence" value="ECO:0007669"/>
    <property type="project" value="UniProtKB-SubCell"/>
</dbReference>
<dbReference type="GO" id="GO:0051539">
    <property type="term" value="F:4 iron, 4 sulfur cluster binding"/>
    <property type="evidence" value="ECO:0007669"/>
    <property type="project" value="UniProtKB-KW"/>
</dbReference>
<dbReference type="GO" id="GO:0005506">
    <property type="term" value="F:iron ion binding"/>
    <property type="evidence" value="ECO:0007669"/>
    <property type="project" value="UniProtKB-UniRule"/>
</dbReference>
<dbReference type="GO" id="GO:0008137">
    <property type="term" value="F:NADH dehydrogenase (ubiquinone) activity"/>
    <property type="evidence" value="ECO:0007669"/>
    <property type="project" value="InterPro"/>
</dbReference>
<dbReference type="GO" id="GO:0048038">
    <property type="term" value="F:quinone binding"/>
    <property type="evidence" value="ECO:0007669"/>
    <property type="project" value="UniProtKB-KW"/>
</dbReference>
<dbReference type="GO" id="GO:0019684">
    <property type="term" value="P:photosynthesis, light reaction"/>
    <property type="evidence" value="ECO:0007669"/>
    <property type="project" value="UniProtKB-UniRule"/>
</dbReference>
<dbReference type="FunFam" id="3.30.70.3270:FF:000006">
    <property type="entry name" value="NAD(P)H-quinone oxidoreductase subunit I, chloroplastic"/>
    <property type="match status" value="1"/>
</dbReference>
<dbReference type="Gene3D" id="3.30.70.3270">
    <property type="match status" value="1"/>
</dbReference>
<dbReference type="HAMAP" id="MF_01351">
    <property type="entry name" value="NDH1_NuoI"/>
    <property type="match status" value="1"/>
</dbReference>
<dbReference type="InterPro" id="IPR017896">
    <property type="entry name" value="4Fe4S_Fe-S-bd"/>
</dbReference>
<dbReference type="InterPro" id="IPR017900">
    <property type="entry name" value="4Fe4S_Fe_S_CS"/>
</dbReference>
<dbReference type="InterPro" id="IPR010226">
    <property type="entry name" value="NADH_quinone_OxRdtase_chainI"/>
</dbReference>
<dbReference type="InterPro" id="IPR004497">
    <property type="entry name" value="NDHI"/>
</dbReference>
<dbReference type="NCBIfam" id="TIGR00403">
    <property type="entry name" value="ndhI"/>
    <property type="match status" value="1"/>
</dbReference>
<dbReference type="NCBIfam" id="TIGR01971">
    <property type="entry name" value="NuoI"/>
    <property type="match status" value="1"/>
</dbReference>
<dbReference type="NCBIfam" id="NF004537">
    <property type="entry name" value="PRK05888.1-3"/>
    <property type="match status" value="1"/>
</dbReference>
<dbReference type="PANTHER" id="PTHR47275">
    <property type="entry name" value="NAD(P)H-QUINONE OXIDOREDUCTASE SUBUNIT I, CHLOROPLASTIC"/>
    <property type="match status" value="1"/>
</dbReference>
<dbReference type="PANTHER" id="PTHR47275:SF1">
    <property type="entry name" value="NAD(P)H-QUINONE OXIDOREDUCTASE SUBUNIT I, CHLOROPLASTIC"/>
    <property type="match status" value="1"/>
</dbReference>
<dbReference type="Pfam" id="PF00037">
    <property type="entry name" value="Fer4"/>
    <property type="match status" value="2"/>
</dbReference>
<dbReference type="SUPFAM" id="SSF54862">
    <property type="entry name" value="4Fe-4S ferredoxins"/>
    <property type="match status" value="1"/>
</dbReference>
<dbReference type="PROSITE" id="PS00198">
    <property type="entry name" value="4FE4S_FER_1"/>
    <property type="match status" value="2"/>
</dbReference>
<dbReference type="PROSITE" id="PS51379">
    <property type="entry name" value="4FE4S_FER_2"/>
    <property type="match status" value="2"/>
</dbReference>
<proteinExistence type="inferred from homology"/>
<comment type="function">
    <text evidence="1">NDH shuttles electrons from NAD(P)H:plastoquinone, via FMN and iron-sulfur (Fe-S) centers, to quinones in the photosynthetic chain and possibly in a chloroplast respiratory chain. The immediate electron acceptor for the enzyme in this species is believed to be plastoquinone. Couples the redox reaction to proton translocation, and thus conserves the redox energy in a proton gradient.</text>
</comment>
<comment type="catalytic activity">
    <reaction evidence="1">
        <text>a plastoquinone + NADH + (n+1) H(+)(in) = a plastoquinol + NAD(+) + n H(+)(out)</text>
        <dbReference type="Rhea" id="RHEA:42608"/>
        <dbReference type="Rhea" id="RHEA-COMP:9561"/>
        <dbReference type="Rhea" id="RHEA-COMP:9562"/>
        <dbReference type="ChEBI" id="CHEBI:15378"/>
        <dbReference type="ChEBI" id="CHEBI:17757"/>
        <dbReference type="ChEBI" id="CHEBI:57540"/>
        <dbReference type="ChEBI" id="CHEBI:57945"/>
        <dbReference type="ChEBI" id="CHEBI:62192"/>
    </reaction>
</comment>
<comment type="catalytic activity">
    <reaction evidence="1">
        <text>a plastoquinone + NADPH + (n+1) H(+)(in) = a plastoquinol + NADP(+) + n H(+)(out)</text>
        <dbReference type="Rhea" id="RHEA:42612"/>
        <dbReference type="Rhea" id="RHEA-COMP:9561"/>
        <dbReference type="Rhea" id="RHEA-COMP:9562"/>
        <dbReference type="ChEBI" id="CHEBI:15378"/>
        <dbReference type="ChEBI" id="CHEBI:17757"/>
        <dbReference type="ChEBI" id="CHEBI:57783"/>
        <dbReference type="ChEBI" id="CHEBI:58349"/>
        <dbReference type="ChEBI" id="CHEBI:62192"/>
    </reaction>
</comment>
<comment type="cofactor">
    <cofactor evidence="1">
        <name>[4Fe-4S] cluster</name>
        <dbReference type="ChEBI" id="CHEBI:49883"/>
    </cofactor>
    <text evidence="1">Binds 2 [4Fe-4S] clusters per subunit.</text>
</comment>
<comment type="subunit">
    <text evidence="1">NDH is composed of at least 16 different subunits, 5 of which are encoded in the nucleus.</text>
</comment>
<comment type="subcellular location">
    <subcellularLocation>
        <location evidence="1">Plastid</location>
        <location evidence="1">Chloroplast thylakoid membrane</location>
        <topology evidence="1">Peripheral membrane protein</topology>
    </subcellularLocation>
</comment>
<comment type="similarity">
    <text evidence="1">Belongs to the complex I 23 kDa subunit family.</text>
</comment>
<accession>Q2QD37</accession>
<accession>A5J1Y7</accession>
<accession>Q4VZL4</accession>